<proteinExistence type="inferred from homology"/>
<evidence type="ECO:0000250" key="1"/>
<evidence type="ECO:0000255" key="2"/>
<evidence type="ECO:0000255" key="3">
    <source>
        <dbReference type="PROSITE-ProRule" id="PRU10106"/>
    </source>
</evidence>
<evidence type="ECO:0000305" key="4"/>
<name>FLII_AQUAE</name>
<sequence>MKGIRRNLQKSYLKRCSEMYLRGLKVSGEIVSAKGIYLEAILPFANIGNEVEIQSNSRRIRGEVIGFSGDKVLVMPYEPVFGLRKGDKVLLKNELVSTKTGNGVVGKVVDPFGNPLDGGFIGFVEEKGLELPQINPLYRERIREVFDTGVRSVNALFTLGKGQKIGIFAGAGVGKSTLLGMITRHSKADVVVLALIGERGREVKEFLEEVLGEEGLKKSVVVVSTADQSPILKVKGAISAVVHAHHFASQGKDVLLLMDSITRLALAQREIGLAAGEPPTLKGFTPSVFQLLTRIAESCGAFKKGSITGIFTVLVEGDDISLDPIADSLMGVLDGHIILSRKRAVRGLFPAVDPVRSLSRLMPKLVSEEHFMKANFFKEVLSKFEDVEELVRIGLYKGGSNPLVDKVINNLEKVESFFKQKPEEKVNFEESLKALDEIYSLLK</sequence>
<feature type="chain" id="PRO_0000144686" description="Flagellum-specific ATP synthase">
    <location>
        <begin position="1"/>
        <end position="443"/>
    </location>
</feature>
<feature type="binding site" evidence="2">
    <location>
        <begin position="169"/>
        <end position="176"/>
    </location>
    <ligand>
        <name>ATP</name>
        <dbReference type="ChEBI" id="CHEBI:30616"/>
    </ligand>
</feature>
<comment type="function">
    <text evidence="1">Probable catalytic subunit of a protein translocase for flagellum-specific export, or a proton translocase involved in local circuits at the flagellum.</text>
</comment>
<comment type="catalytic activity">
    <reaction evidence="3">
        <text>ATP + H2O + 4 H(+)(in) = ADP + phosphate + 5 H(+)(out)</text>
        <dbReference type="Rhea" id="RHEA:57720"/>
        <dbReference type="ChEBI" id="CHEBI:15377"/>
        <dbReference type="ChEBI" id="CHEBI:15378"/>
        <dbReference type="ChEBI" id="CHEBI:30616"/>
        <dbReference type="ChEBI" id="CHEBI:43474"/>
        <dbReference type="ChEBI" id="CHEBI:456216"/>
        <dbReference type="EC" id="7.1.2.2"/>
    </reaction>
</comment>
<comment type="subcellular location">
    <subcellularLocation>
        <location evidence="4">Cytoplasm</location>
    </subcellularLocation>
</comment>
<comment type="similarity">
    <text evidence="4">Belongs to the ATPase alpha/beta chains family.</text>
</comment>
<organism>
    <name type="scientific">Aquifex aeolicus (strain VF5)</name>
    <dbReference type="NCBI Taxonomy" id="224324"/>
    <lineage>
        <taxon>Bacteria</taxon>
        <taxon>Pseudomonadati</taxon>
        <taxon>Aquificota</taxon>
        <taxon>Aquificia</taxon>
        <taxon>Aquificales</taxon>
        <taxon>Aquificaceae</taxon>
        <taxon>Aquifex</taxon>
    </lineage>
</organism>
<accession>O67531</accession>
<dbReference type="EC" id="7.1.2.2"/>
<dbReference type="EMBL" id="AE000657">
    <property type="protein sequence ID" value="AAC07494.1"/>
    <property type="molecule type" value="Genomic_DNA"/>
</dbReference>
<dbReference type="PIR" id="A70438">
    <property type="entry name" value="A70438"/>
</dbReference>
<dbReference type="RefSeq" id="NP_214096.1">
    <property type="nucleotide sequence ID" value="NC_000918.1"/>
</dbReference>
<dbReference type="SMR" id="O67531"/>
<dbReference type="FunCoup" id="O67531">
    <property type="interactions" value="98"/>
</dbReference>
<dbReference type="STRING" id="224324.aq_1595"/>
<dbReference type="EnsemblBacteria" id="AAC07494">
    <property type="protein sequence ID" value="AAC07494"/>
    <property type="gene ID" value="aq_1595"/>
</dbReference>
<dbReference type="KEGG" id="aae:aq_1595"/>
<dbReference type="PATRIC" id="fig|224324.8.peg.1231"/>
<dbReference type="eggNOG" id="COG1157">
    <property type="taxonomic scope" value="Bacteria"/>
</dbReference>
<dbReference type="HOGENOM" id="CLU_022398_5_1_0"/>
<dbReference type="InParanoid" id="O67531"/>
<dbReference type="OrthoDB" id="9802718at2"/>
<dbReference type="BRENDA" id="7.4.2.8">
    <property type="organism ID" value="396"/>
</dbReference>
<dbReference type="Proteomes" id="UP000000798">
    <property type="component" value="Chromosome"/>
</dbReference>
<dbReference type="GO" id="GO:0005737">
    <property type="term" value="C:cytoplasm"/>
    <property type="evidence" value="ECO:0007669"/>
    <property type="project" value="UniProtKB-SubCell"/>
</dbReference>
<dbReference type="GO" id="GO:0030257">
    <property type="term" value="C:type III protein secretion system complex"/>
    <property type="evidence" value="ECO:0007669"/>
    <property type="project" value="InterPro"/>
</dbReference>
<dbReference type="GO" id="GO:0005524">
    <property type="term" value="F:ATP binding"/>
    <property type="evidence" value="ECO:0007669"/>
    <property type="project" value="UniProtKB-KW"/>
</dbReference>
<dbReference type="GO" id="GO:0016887">
    <property type="term" value="F:ATP hydrolysis activity"/>
    <property type="evidence" value="ECO:0007669"/>
    <property type="project" value="InterPro"/>
</dbReference>
<dbReference type="GO" id="GO:0044781">
    <property type="term" value="P:bacterial-type flagellum organization"/>
    <property type="evidence" value="ECO:0007669"/>
    <property type="project" value="UniProtKB-KW"/>
</dbReference>
<dbReference type="GO" id="GO:0030254">
    <property type="term" value="P:protein secretion by the type III secretion system"/>
    <property type="evidence" value="ECO:0007669"/>
    <property type="project" value="InterPro"/>
</dbReference>
<dbReference type="GO" id="GO:0015986">
    <property type="term" value="P:proton motive force-driven ATP synthesis"/>
    <property type="evidence" value="ECO:0007669"/>
    <property type="project" value="GOC"/>
</dbReference>
<dbReference type="GO" id="GO:1902600">
    <property type="term" value="P:proton transmembrane transport"/>
    <property type="evidence" value="ECO:0007669"/>
    <property type="project" value="UniProtKB-KW"/>
</dbReference>
<dbReference type="CDD" id="cd18114">
    <property type="entry name" value="ATP-synt_flagellum-secretory_path_III_C"/>
    <property type="match status" value="1"/>
</dbReference>
<dbReference type="CDD" id="cd18117">
    <property type="entry name" value="ATP-synt_flagellum-secretory_path_III_N"/>
    <property type="match status" value="1"/>
</dbReference>
<dbReference type="CDD" id="cd01136">
    <property type="entry name" value="ATPase_flagellum-secretory_path_III"/>
    <property type="match status" value="1"/>
</dbReference>
<dbReference type="FunFam" id="3.40.50.12240:FF:000002">
    <property type="entry name" value="Flagellum-specific ATP synthase FliI"/>
    <property type="match status" value="1"/>
</dbReference>
<dbReference type="Gene3D" id="3.40.50.12240">
    <property type="match status" value="1"/>
</dbReference>
<dbReference type="InterPro" id="IPR003593">
    <property type="entry name" value="AAA+_ATPase"/>
</dbReference>
<dbReference type="InterPro" id="IPR020003">
    <property type="entry name" value="ATPase_a/bsu_AS"/>
</dbReference>
<dbReference type="InterPro" id="IPR050053">
    <property type="entry name" value="ATPase_alpha/beta_chains"/>
</dbReference>
<dbReference type="InterPro" id="IPR004100">
    <property type="entry name" value="ATPase_F1/V1/A1_a/bsu_N"/>
</dbReference>
<dbReference type="InterPro" id="IPR000194">
    <property type="entry name" value="ATPase_F1/V1/A1_a/bsu_nucl-bd"/>
</dbReference>
<dbReference type="InterPro" id="IPR005714">
    <property type="entry name" value="ATPase_T3SS_FliI/YscN"/>
</dbReference>
<dbReference type="InterPro" id="IPR027417">
    <property type="entry name" value="P-loop_NTPase"/>
</dbReference>
<dbReference type="InterPro" id="IPR040627">
    <property type="entry name" value="T3SS_ATPase_C"/>
</dbReference>
<dbReference type="NCBIfam" id="TIGR01026">
    <property type="entry name" value="fliI_yscN"/>
    <property type="match status" value="1"/>
</dbReference>
<dbReference type="PANTHER" id="PTHR15184">
    <property type="entry name" value="ATP SYNTHASE"/>
    <property type="match status" value="1"/>
</dbReference>
<dbReference type="PANTHER" id="PTHR15184:SF9">
    <property type="entry name" value="SPI-1 TYPE 3 SECRETION SYSTEM ATPASE"/>
    <property type="match status" value="1"/>
</dbReference>
<dbReference type="Pfam" id="PF00006">
    <property type="entry name" value="ATP-synt_ab"/>
    <property type="match status" value="1"/>
</dbReference>
<dbReference type="Pfam" id="PF02874">
    <property type="entry name" value="ATP-synt_ab_N"/>
    <property type="match status" value="1"/>
</dbReference>
<dbReference type="Pfam" id="PF18269">
    <property type="entry name" value="T3SS_ATPase_C"/>
    <property type="match status" value="1"/>
</dbReference>
<dbReference type="SMART" id="SM00382">
    <property type="entry name" value="AAA"/>
    <property type="match status" value="1"/>
</dbReference>
<dbReference type="SUPFAM" id="SSF52540">
    <property type="entry name" value="P-loop containing nucleoside triphosphate hydrolases"/>
    <property type="match status" value="1"/>
</dbReference>
<dbReference type="PROSITE" id="PS00152">
    <property type="entry name" value="ATPASE_ALPHA_BETA"/>
    <property type="match status" value="1"/>
</dbReference>
<reference key="1">
    <citation type="journal article" date="1998" name="Nature">
        <title>The complete genome of the hyperthermophilic bacterium Aquifex aeolicus.</title>
        <authorList>
            <person name="Deckert G."/>
            <person name="Warren P.V."/>
            <person name="Gaasterland T."/>
            <person name="Young W.G."/>
            <person name="Lenox A.L."/>
            <person name="Graham D.E."/>
            <person name="Overbeek R."/>
            <person name="Snead M.A."/>
            <person name="Keller M."/>
            <person name="Aujay M."/>
            <person name="Huber R."/>
            <person name="Feldman R.A."/>
            <person name="Short J.M."/>
            <person name="Olsen G.J."/>
            <person name="Swanson R.V."/>
        </authorList>
    </citation>
    <scope>NUCLEOTIDE SEQUENCE [LARGE SCALE GENOMIC DNA]</scope>
    <source>
        <strain>VF5</strain>
    </source>
</reference>
<protein>
    <recommendedName>
        <fullName>Flagellum-specific ATP synthase</fullName>
        <ecNumber>7.1.2.2</ecNumber>
    </recommendedName>
</protein>
<gene>
    <name type="primary">fliI</name>
    <name type="ordered locus">aq_1595</name>
</gene>
<keyword id="KW-0066">ATP synthesis</keyword>
<keyword id="KW-0067">ATP-binding</keyword>
<keyword id="KW-1005">Bacterial flagellum biogenesis</keyword>
<keyword id="KW-1006">Bacterial flagellum protein export</keyword>
<keyword id="KW-0963">Cytoplasm</keyword>
<keyword id="KW-0375">Hydrogen ion transport</keyword>
<keyword id="KW-0406">Ion transport</keyword>
<keyword id="KW-0547">Nucleotide-binding</keyword>
<keyword id="KW-0653">Protein transport</keyword>
<keyword id="KW-1185">Reference proteome</keyword>
<keyword id="KW-1278">Translocase</keyword>
<keyword id="KW-0813">Transport</keyword>